<dbReference type="EC" id="6.1.1.1" evidence="1"/>
<dbReference type="EMBL" id="AE017223">
    <property type="protein sequence ID" value="AAX74299.1"/>
    <property type="molecule type" value="Genomic_DNA"/>
</dbReference>
<dbReference type="RefSeq" id="WP_002964050.1">
    <property type="nucleotide sequence ID" value="NC_006932.1"/>
</dbReference>
<dbReference type="SMR" id="Q57DI5"/>
<dbReference type="EnsemblBacteria" id="AAX74299">
    <property type="protein sequence ID" value="AAX74299"/>
    <property type="gene ID" value="BruAb1_0935"/>
</dbReference>
<dbReference type="GeneID" id="93016704"/>
<dbReference type="KEGG" id="bmb:BruAb1_0935"/>
<dbReference type="HOGENOM" id="CLU_024003_0_3_5"/>
<dbReference type="Proteomes" id="UP000000540">
    <property type="component" value="Chromosome I"/>
</dbReference>
<dbReference type="GO" id="GO:0005829">
    <property type="term" value="C:cytosol"/>
    <property type="evidence" value="ECO:0007669"/>
    <property type="project" value="TreeGrafter"/>
</dbReference>
<dbReference type="GO" id="GO:0005524">
    <property type="term" value="F:ATP binding"/>
    <property type="evidence" value="ECO:0007669"/>
    <property type="project" value="UniProtKB-UniRule"/>
</dbReference>
<dbReference type="GO" id="GO:0003723">
    <property type="term" value="F:RNA binding"/>
    <property type="evidence" value="ECO:0007669"/>
    <property type="project" value="UniProtKB-KW"/>
</dbReference>
<dbReference type="GO" id="GO:0004831">
    <property type="term" value="F:tyrosine-tRNA ligase activity"/>
    <property type="evidence" value="ECO:0007669"/>
    <property type="project" value="UniProtKB-UniRule"/>
</dbReference>
<dbReference type="GO" id="GO:0006437">
    <property type="term" value="P:tyrosyl-tRNA aminoacylation"/>
    <property type="evidence" value="ECO:0007669"/>
    <property type="project" value="UniProtKB-UniRule"/>
</dbReference>
<dbReference type="CDD" id="cd00165">
    <property type="entry name" value="S4"/>
    <property type="match status" value="1"/>
</dbReference>
<dbReference type="CDD" id="cd00805">
    <property type="entry name" value="TyrRS_core"/>
    <property type="match status" value="1"/>
</dbReference>
<dbReference type="FunFam" id="1.10.240.10:FF:000001">
    <property type="entry name" value="Tyrosine--tRNA ligase"/>
    <property type="match status" value="1"/>
</dbReference>
<dbReference type="FunFam" id="3.40.50.620:FF:000008">
    <property type="entry name" value="Tyrosine--tRNA ligase"/>
    <property type="match status" value="1"/>
</dbReference>
<dbReference type="Gene3D" id="3.40.50.620">
    <property type="entry name" value="HUPs"/>
    <property type="match status" value="1"/>
</dbReference>
<dbReference type="Gene3D" id="3.10.290.10">
    <property type="entry name" value="RNA-binding S4 domain"/>
    <property type="match status" value="1"/>
</dbReference>
<dbReference type="Gene3D" id="1.10.240.10">
    <property type="entry name" value="Tyrosyl-Transfer RNA Synthetase"/>
    <property type="match status" value="1"/>
</dbReference>
<dbReference type="HAMAP" id="MF_02006">
    <property type="entry name" value="Tyr_tRNA_synth_type1"/>
    <property type="match status" value="1"/>
</dbReference>
<dbReference type="InterPro" id="IPR001412">
    <property type="entry name" value="aa-tRNA-synth_I_CS"/>
</dbReference>
<dbReference type="InterPro" id="IPR002305">
    <property type="entry name" value="aa-tRNA-synth_Ic"/>
</dbReference>
<dbReference type="InterPro" id="IPR014729">
    <property type="entry name" value="Rossmann-like_a/b/a_fold"/>
</dbReference>
<dbReference type="InterPro" id="IPR036986">
    <property type="entry name" value="S4_RNA-bd_sf"/>
</dbReference>
<dbReference type="InterPro" id="IPR054608">
    <property type="entry name" value="SYY-like_C"/>
</dbReference>
<dbReference type="InterPro" id="IPR002307">
    <property type="entry name" value="Tyr-tRNA-ligase"/>
</dbReference>
<dbReference type="InterPro" id="IPR024088">
    <property type="entry name" value="Tyr-tRNA-ligase_bac-type"/>
</dbReference>
<dbReference type="InterPro" id="IPR024107">
    <property type="entry name" value="Tyr-tRNA-ligase_bac_1"/>
</dbReference>
<dbReference type="NCBIfam" id="TIGR00234">
    <property type="entry name" value="tyrS"/>
    <property type="match status" value="1"/>
</dbReference>
<dbReference type="PANTHER" id="PTHR11766:SF0">
    <property type="entry name" value="TYROSINE--TRNA LIGASE, MITOCHONDRIAL"/>
    <property type="match status" value="1"/>
</dbReference>
<dbReference type="PANTHER" id="PTHR11766">
    <property type="entry name" value="TYROSYL-TRNA SYNTHETASE"/>
    <property type="match status" value="1"/>
</dbReference>
<dbReference type="Pfam" id="PF22421">
    <property type="entry name" value="SYY_C-terminal"/>
    <property type="match status" value="1"/>
</dbReference>
<dbReference type="Pfam" id="PF00579">
    <property type="entry name" value="tRNA-synt_1b"/>
    <property type="match status" value="1"/>
</dbReference>
<dbReference type="PRINTS" id="PR01040">
    <property type="entry name" value="TRNASYNTHTYR"/>
</dbReference>
<dbReference type="SUPFAM" id="SSF55174">
    <property type="entry name" value="Alpha-L RNA-binding motif"/>
    <property type="match status" value="1"/>
</dbReference>
<dbReference type="SUPFAM" id="SSF52374">
    <property type="entry name" value="Nucleotidylyl transferase"/>
    <property type="match status" value="1"/>
</dbReference>
<dbReference type="PROSITE" id="PS00178">
    <property type="entry name" value="AA_TRNA_LIGASE_I"/>
    <property type="match status" value="1"/>
</dbReference>
<dbReference type="PROSITE" id="PS50889">
    <property type="entry name" value="S4"/>
    <property type="match status" value="1"/>
</dbReference>
<sequence>MSGFKSDFLRTLSERGFIHQISDESGLDELLAKETVTAYIGFDPTAPSLHAGGLIQIMMLYWLQQTGHKPVALMGGGTGMVGDPSFKDEARKLMTEDTIAENMASIKRVFANYLTFGDGANDALMVNNGEWLRNINYLEFLRDVGRHFSVNRMLSFDSVKLRLDREQSLSFLEFNYMILQAYDFVELNKRYGLRLQMGGSDQWGNIVNGIDLGHRMGTPQLYALTSPLLTTASGQKMGKSLGGAIWLNADMLSAYDFWQYWRNTEDADVERFLKLYTTLPLDEIARLAELGGAEINEAKKILATEVTAMLHGRDAAEEAAETARKTFEDGELSENLPTVGVHKATLNDGIGVLALMVLAELCTTNGEARRHVEGGAVRINDEPVSDPRMVVNAAALNDQGLIKLSLGKKRHVLIRPA</sequence>
<name>SYY_BRUAB</name>
<organism>
    <name type="scientific">Brucella abortus biovar 1 (strain 9-941)</name>
    <dbReference type="NCBI Taxonomy" id="262698"/>
    <lineage>
        <taxon>Bacteria</taxon>
        <taxon>Pseudomonadati</taxon>
        <taxon>Pseudomonadota</taxon>
        <taxon>Alphaproteobacteria</taxon>
        <taxon>Hyphomicrobiales</taxon>
        <taxon>Brucellaceae</taxon>
        <taxon>Brucella/Ochrobactrum group</taxon>
        <taxon>Brucella</taxon>
    </lineage>
</organism>
<reference key="1">
    <citation type="journal article" date="2005" name="J. Bacteriol.">
        <title>Completion of the genome sequence of Brucella abortus and comparison to the highly similar genomes of Brucella melitensis and Brucella suis.</title>
        <authorList>
            <person name="Halling S.M."/>
            <person name="Peterson-Burch B.D."/>
            <person name="Bricker B.J."/>
            <person name="Zuerner R.L."/>
            <person name="Qing Z."/>
            <person name="Li L.-L."/>
            <person name="Kapur V."/>
            <person name="Alt D.P."/>
            <person name="Olsen S.C."/>
        </authorList>
    </citation>
    <scope>NUCLEOTIDE SEQUENCE [LARGE SCALE GENOMIC DNA]</scope>
    <source>
        <strain>9-941</strain>
    </source>
</reference>
<gene>
    <name evidence="1" type="primary">tyrS</name>
    <name type="ordered locus">BruAb1_0935</name>
</gene>
<evidence type="ECO:0000255" key="1">
    <source>
        <dbReference type="HAMAP-Rule" id="MF_02006"/>
    </source>
</evidence>
<proteinExistence type="inferred from homology"/>
<keyword id="KW-0030">Aminoacyl-tRNA synthetase</keyword>
<keyword id="KW-0067">ATP-binding</keyword>
<keyword id="KW-0963">Cytoplasm</keyword>
<keyword id="KW-0436">Ligase</keyword>
<keyword id="KW-0547">Nucleotide-binding</keyword>
<keyword id="KW-0648">Protein biosynthesis</keyword>
<keyword id="KW-0694">RNA-binding</keyword>
<accession>Q57DI5</accession>
<comment type="function">
    <text evidence="1">Catalyzes the attachment of tyrosine to tRNA(Tyr) in a two-step reaction: tyrosine is first activated by ATP to form Tyr-AMP and then transferred to the acceptor end of tRNA(Tyr).</text>
</comment>
<comment type="catalytic activity">
    <reaction evidence="1">
        <text>tRNA(Tyr) + L-tyrosine + ATP = L-tyrosyl-tRNA(Tyr) + AMP + diphosphate + H(+)</text>
        <dbReference type="Rhea" id="RHEA:10220"/>
        <dbReference type="Rhea" id="RHEA-COMP:9706"/>
        <dbReference type="Rhea" id="RHEA-COMP:9707"/>
        <dbReference type="ChEBI" id="CHEBI:15378"/>
        <dbReference type="ChEBI" id="CHEBI:30616"/>
        <dbReference type="ChEBI" id="CHEBI:33019"/>
        <dbReference type="ChEBI" id="CHEBI:58315"/>
        <dbReference type="ChEBI" id="CHEBI:78442"/>
        <dbReference type="ChEBI" id="CHEBI:78536"/>
        <dbReference type="ChEBI" id="CHEBI:456215"/>
        <dbReference type="EC" id="6.1.1.1"/>
    </reaction>
</comment>
<comment type="subunit">
    <text evidence="1">Homodimer.</text>
</comment>
<comment type="subcellular location">
    <subcellularLocation>
        <location evidence="1">Cytoplasm</location>
    </subcellularLocation>
</comment>
<comment type="similarity">
    <text evidence="1">Belongs to the class-I aminoacyl-tRNA synthetase family. TyrS type 1 subfamily.</text>
</comment>
<feature type="chain" id="PRO_0000234688" description="Tyrosine--tRNA ligase">
    <location>
        <begin position="1"/>
        <end position="417"/>
    </location>
</feature>
<feature type="domain" description="S4 RNA-binding" evidence="1">
    <location>
        <begin position="350"/>
        <end position="417"/>
    </location>
</feature>
<feature type="short sequence motif" description="'HIGH' region">
    <location>
        <begin position="44"/>
        <end position="53"/>
    </location>
</feature>
<feature type="short sequence motif" description="'KMSKS' region">
    <location>
        <begin position="236"/>
        <end position="240"/>
    </location>
</feature>
<feature type="binding site" evidence="1">
    <location>
        <position position="39"/>
    </location>
    <ligand>
        <name>L-tyrosine</name>
        <dbReference type="ChEBI" id="CHEBI:58315"/>
    </ligand>
</feature>
<feature type="binding site" evidence="1">
    <location>
        <position position="176"/>
    </location>
    <ligand>
        <name>L-tyrosine</name>
        <dbReference type="ChEBI" id="CHEBI:58315"/>
    </ligand>
</feature>
<feature type="binding site" evidence="1">
    <location>
        <position position="180"/>
    </location>
    <ligand>
        <name>L-tyrosine</name>
        <dbReference type="ChEBI" id="CHEBI:58315"/>
    </ligand>
</feature>
<feature type="binding site" evidence="1">
    <location>
        <position position="239"/>
    </location>
    <ligand>
        <name>ATP</name>
        <dbReference type="ChEBI" id="CHEBI:30616"/>
    </ligand>
</feature>
<protein>
    <recommendedName>
        <fullName evidence="1">Tyrosine--tRNA ligase</fullName>
        <ecNumber evidence="1">6.1.1.1</ecNumber>
    </recommendedName>
    <alternativeName>
        <fullName evidence="1">Tyrosyl-tRNA synthetase</fullName>
        <shortName evidence="1">TyrRS</shortName>
    </alternativeName>
</protein>